<sequence length="334" mass="36252">MLRIFHNTKYEFVRWWRVAAGLTLAFIAAGFVSFAVTGGVNYSIEFTGGTLMQLQFKTPPDVAEVRSALDAAGIQGAEIQQFGANTDFTIRARDEKQVEAQDAGAEGISRQITAALDAKFGAGTVTIVRTEAVGPKVGAELRTGAAMAMLIASIFTLIYLAIRFDWRFGLAAVLSTTHDILITLAFIKIFHIEVSLTVVAAILTLVGYSANDTIIIFDRVRENLKKPHKGETLSHILDRSINETLPRSIMTHTTTFSATLALLLLAGEVIRPFAWVMAFGVVMATFSSIYVAGPLLLWIEGRWPRLDDAATARAVRAGEAATTTARGTDRVSAR</sequence>
<protein>
    <recommendedName>
        <fullName>Protein translocase subunit SecF</fullName>
    </recommendedName>
</protein>
<comment type="function">
    <text evidence="1">Part of the Sec protein translocase complex. Interacts with the SecYEG preprotein conducting channel. SecDF uses the proton motive force (PMF) to complete protein translocation after the ATP-dependent function of SecA.</text>
</comment>
<comment type="subunit">
    <text evidence="1">Forms a complex with SecD. Part of the essential Sec protein translocation apparatus which comprises SecA, SecYEG and auxiliary proteins SecDF. Other proteins may also be involved.</text>
</comment>
<comment type="subcellular location">
    <subcellularLocation>
        <location evidence="1">Cell inner membrane</location>
        <topology evidence="1">Multi-pass membrane protein</topology>
    </subcellularLocation>
</comment>
<comment type="similarity">
    <text evidence="1">Belongs to the SecD/SecF family. SecF subfamily.</text>
</comment>
<gene>
    <name evidence="1" type="primary">secF</name>
    <name type="ordered locus">GAU_1561</name>
</gene>
<organism>
    <name type="scientific">Gemmatimonas aurantiaca (strain DSM 14586 / JCM 11422 / NBRC 100505 / T-27)</name>
    <dbReference type="NCBI Taxonomy" id="379066"/>
    <lineage>
        <taxon>Bacteria</taxon>
        <taxon>Pseudomonadati</taxon>
        <taxon>Gemmatimonadota</taxon>
        <taxon>Gemmatimonadia</taxon>
        <taxon>Gemmatimonadales</taxon>
        <taxon>Gemmatimonadaceae</taxon>
        <taxon>Gemmatimonas</taxon>
    </lineage>
</organism>
<feature type="chain" id="PRO_0000412696" description="Protein translocase subunit SecF">
    <location>
        <begin position="1"/>
        <end position="334"/>
    </location>
</feature>
<feature type="transmembrane region" description="Helical" evidence="1">
    <location>
        <begin position="18"/>
        <end position="38"/>
    </location>
</feature>
<feature type="transmembrane region" description="Helical" evidence="1">
    <location>
        <begin position="144"/>
        <end position="164"/>
    </location>
</feature>
<feature type="transmembrane region" description="Helical" evidence="1">
    <location>
        <begin position="168"/>
        <end position="190"/>
    </location>
</feature>
<feature type="transmembrane region" description="Helical" evidence="1">
    <location>
        <begin position="195"/>
        <end position="217"/>
    </location>
</feature>
<feature type="transmembrane region" description="Helical" evidence="1">
    <location>
        <begin position="258"/>
        <end position="278"/>
    </location>
</feature>
<feature type="transmembrane region" description="Helical" evidence="1">
    <location>
        <begin position="279"/>
        <end position="299"/>
    </location>
</feature>
<proteinExistence type="inferred from homology"/>
<dbReference type="EMBL" id="AP009153">
    <property type="protein sequence ID" value="BAH38603.1"/>
    <property type="molecule type" value="Genomic_DNA"/>
</dbReference>
<dbReference type="RefSeq" id="WP_012683050.1">
    <property type="nucleotide sequence ID" value="NC_012489.1"/>
</dbReference>
<dbReference type="SMR" id="C1A8P3"/>
<dbReference type="STRING" id="379066.GAU_1561"/>
<dbReference type="KEGG" id="gau:GAU_1561"/>
<dbReference type="eggNOG" id="COG0341">
    <property type="taxonomic scope" value="Bacteria"/>
</dbReference>
<dbReference type="HOGENOM" id="CLU_050012_0_1_0"/>
<dbReference type="OrthoDB" id="9774769at2"/>
<dbReference type="Proteomes" id="UP000002209">
    <property type="component" value="Chromosome"/>
</dbReference>
<dbReference type="GO" id="GO:0005886">
    <property type="term" value="C:plasma membrane"/>
    <property type="evidence" value="ECO:0007669"/>
    <property type="project" value="UniProtKB-SubCell"/>
</dbReference>
<dbReference type="GO" id="GO:0015450">
    <property type="term" value="F:protein-transporting ATPase activity"/>
    <property type="evidence" value="ECO:0007669"/>
    <property type="project" value="InterPro"/>
</dbReference>
<dbReference type="GO" id="GO:0065002">
    <property type="term" value="P:intracellular protein transmembrane transport"/>
    <property type="evidence" value="ECO:0007669"/>
    <property type="project" value="UniProtKB-UniRule"/>
</dbReference>
<dbReference type="GO" id="GO:0006605">
    <property type="term" value="P:protein targeting"/>
    <property type="evidence" value="ECO:0007669"/>
    <property type="project" value="UniProtKB-UniRule"/>
</dbReference>
<dbReference type="GO" id="GO:0043952">
    <property type="term" value="P:protein transport by the Sec complex"/>
    <property type="evidence" value="ECO:0007669"/>
    <property type="project" value="UniProtKB-UniRule"/>
</dbReference>
<dbReference type="Gene3D" id="1.20.1640.10">
    <property type="entry name" value="Multidrug efflux transporter AcrB transmembrane domain"/>
    <property type="match status" value="1"/>
</dbReference>
<dbReference type="HAMAP" id="MF_01464_B">
    <property type="entry name" value="SecF_B"/>
    <property type="match status" value="1"/>
</dbReference>
<dbReference type="InterPro" id="IPR022813">
    <property type="entry name" value="SecD/SecF_arch_bac"/>
</dbReference>
<dbReference type="InterPro" id="IPR022645">
    <property type="entry name" value="SecD/SecF_bac"/>
</dbReference>
<dbReference type="InterPro" id="IPR022646">
    <property type="entry name" value="SecD/SecF_CS"/>
</dbReference>
<dbReference type="InterPro" id="IPR048634">
    <property type="entry name" value="SecD_SecF_C"/>
</dbReference>
<dbReference type="InterPro" id="IPR055344">
    <property type="entry name" value="SecD_SecF_C_bact"/>
</dbReference>
<dbReference type="InterPro" id="IPR005665">
    <property type="entry name" value="SecF_bac"/>
</dbReference>
<dbReference type="NCBIfam" id="TIGR00916">
    <property type="entry name" value="2A0604s01"/>
    <property type="match status" value="1"/>
</dbReference>
<dbReference type="NCBIfam" id="TIGR00966">
    <property type="entry name" value="transloc_SecF"/>
    <property type="match status" value="1"/>
</dbReference>
<dbReference type="PANTHER" id="PTHR30081:SF8">
    <property type="entry name" value="PROTEIN TRANSLOCASE SUBUNIT SECF"/>
    <property type="match status" value="1"/>
</dbReference>
<dbReference type="PANTHER" id="PTHR30081">
    <property type="entry name" value="PROTEIN-EXPORT MEMBRANE PROTEIN SEC"/>
    <property type="match status" value="1"/>
</dbReference>
<dbReference type="Pfam" id="PF07549">
    <property type="entry name" value="Sec_GG"/>
    <property type="match status" value="1"/>
</dbReference>
<dbReference type="Pfam" id="PF02355">
    <property type="entry name" value="SecD_SecF_C"/>
    <property type="match status" value="1"/>
</dbReference>
<dbReference type="PRINTS" id="PR01755">
    <property type="entry name" value="SECFTRNLCASE"/>
</dbReference>
<dbReference type="SUPFAM" id="SSF82866">
    <property type="entry name" value="Multidrug efflux transporter AcrB transmembrane domain"/>
    <property type="match status" value="1"/>
</dbReference>
<name>SECF_GEMAT</name>
<reference key="1">
    <citation type="submission" date="2006-03" db="EMBL/GenBank/DDBJ databases">
        <title>Complete genome sequence of Gemmatimonas aurantiaca T-27 that represents a novel phylum Gemmatimonadetes.</title>
        <authorList>
            <person name="Takasaki K."/>
            <person name="Ichikawa N."/>
            <person name="Miura H."/>
            <person name="Matsushita S."/>
            <person name="Watanabe Y."/>
            <person name="Oguchi A."/>
            <person name="Ankai A."/>
            <person name="Yashiro I."/>
            <person name="Takahashi M."/>
            <person name="Terui Y."/>
            <person name="Fukui S."/>
            <person name="Yokoyama H."/>
            <person name="Tanikawa S."/>
            <person name="Hanada S."/>
            <person name="Kamagata Y."/>
            <person name="Fujita N."/>
        </authorList>
    </citation>
    <scope>NUCLEOTIDE SEQUENCE [LARGE SCALE GENOMIC DNA]</scope>
    <source>
        <strain>DSM 14586 / JCM 11422 / NBRC 100505 / T-27</strain>
    </source>
</reference>
<accession>C1A8P3</accession>
<keyword id="KW-0997">Cell inner membrane</keyword>
<keyword id="KW-1003">Cell membrane</keyword>
<keyword id="KW-0472">Membrane</keyword>
<keyword id="KW-0653">Protein transport</keyword>
<keyword id="KW-1185">Reference proteome</keyword>
<keyword id="KW-0811">Translocation</keyword>
<keyword id="KW-0812">Transmembrane</keyword>
<keyword id="KW-1133">Transmembrane helix</keyword>
<keyword id="KW-0813">Transport</keyword>
<evidence type="ECO:0000255" key="1">
    <source>
        <dbReference type="HAMAP-Rule" id="MF_01464"/>
    </source>
</evidence>